<keyword id="KW-0030">Aminoacyl-tRNA synthetase</keyword>
<keyword id="KW-0067">ATP-binding</keyword>
<keyword id="KW-0963">Cytoplasm</keyword>
<keyword id="KW-0436">Ligase</keyword>
<keyword id="KW-0479">Metal-binding</keyword>
<keyword id="KW-0547">Nucleotide-binding</keyword>
<keyword id="KW-0648">Protein biosynthesis</keyword>
<keyword id="KW-0694">RNA-binding</keyword>
<keyword id="KW-0820">tRNA-binding</keyword>
<keyword id="KW-0862">Zinc</keyword>
<gene>
    <name evidence="1" type="primary">alaS</name>
    <name type="ordered locus">SA1446</name>
</gene>
<name>SYA_STAAN</name>
<comment type="function">
    <text evidence="1">Catalyzes the attachment of alanine to tRNA(Ala) in a two-step reaction: alanine is first activated by ATP to form Ala-AMP and then transferred to the acceptor end of tRNA(Ala). Also edits incorrectly charged Ser-tRNA(Ala) and Gly-tRNA(Ala) via its editing domain.</text>
</comment>
<comment type="catalytic activity">
    <reaction evidence="1">
        <text>tRNA(Ala) + L-alanine + ATP = L-alanyl-tRNA(Ala) + AMP + diphosphate</text>
        <dbReference type="Rhea" id="RHEA:12540"/>
        <dbReference type="Rhea" id="RHEA-COMP:9657"/>
        <dbReference type="Rhea" id="RHEA-COMP:9923"/>
        <dbReference type="ChEBI" id="CHEBI:30616"/>
        <dbReference type="ChEBI" id="CHEBI:33019"/>
        <dbReference type="ChEBI" id="CHEBI:57972"/>
        <dbReference type="ChEBI" id="CHEBI:78442"/>
        <dbReference type="ChEBI" id="CHEBI:78497"/>
        <dbReference type="ChEBI" id="CHEBI:456215"/>
        <dbReference type="EC" id="6.1.1.7"/>
    </reaction>
</comment>
<comment type="cofactor">
    <cofactor evidence="1">
        <name>Zn(2+)</name>
        <dbReference type="ChEBI" id="CHEBI:29105"/>
    </cofactor>
    <text evidence="1">Binds 1 zinc ion per subunit.</text>
</comment>
<comment type="subcellular location">
    <subcellularLocation>
        <location evidence="1">Cytoplasm</location>
    </subcellularLocation>
</comment>
<comment type="domain">
    <text evidence="1">Consists of three domains; the N-terminal catalytic domain, the editing domain and the C-terminal C-Ala domain. The editing domain removes incorrectly charged amino acids, while the C-Ala domain, along with tRNA(Ala), serves as a bridge to cooperatively bring together the editing and aminoacylation centers thus stimulating deacylation of misacylated tRNAs.</text>
</comment>
<comment type="similarity">
    <text evidence="1">Belongs to the class-II aminoacyl-tRNA synthetase family.</text>
</comment>
<proteinExistence type="evidence at protein level"/>
<reference key="1">
    <citation type="journal article" date="2001" name="Lancet">
        <title>Whole genome sequencing of meticillin-resistant Staphylococcus aureus.</title>
        <authorList>
            <person name="Kuroda M."/>
            <person name="Ohta T."/>
            <person name="Uchiyama I."/>
            <person name="Baba T."/>
            <person name="Yuzawa H."/>
            <person name="Kobayashi I."/>
            <person name="Cui L."/>
            <person name="Oguchi A."/>
            <person name="Aoki K."/>
            <person name="Nagai Y."/>
            <person name="Lian J.-Q."/>
            <person name="Ito T."/>
            <person name="Kanamori M."/>
            <person name="Matsumaru H."/>
            <person name="Maruyama A."/>
            <person name="Murakami H."/>
            <person name="Hosoyama A."/>
            <person name="Mizutani-Ui Y."/>
            <person name="Takahashi N.K."/>
            <person name="Sawano T."/>
            <person name="Inoue R."/>
            <person name="Kaito C."/>
            <person name="Sekimizu K."/>
            <person name="Hirakawa H."/>
            <person name="Kuhara S."/>
            <person name="Goto S."/>
            <person name="Yabuzaki J."/>
            <person name="Kanehisa M."/>
            <person name="Yamashita A."/>
            <person name="Oshima K."/>
            <person name="Furuya K."/>
            <person name="Yoshino C."/>
            <person name="Shiba T."/>
            <person name="Hattori M."/>
            <person name="Ogasawara N."/>
            <person name="Hayashi H."/>
            <person name="Hiramatsu K."/>
        </authorList>
    </citation>
    <scope>NUCLEOTIDE SEQUENCE [LARGE SCALE GENOMIC DNA]</scope>
    <source>
        <strain>N315</strain>
    </source>
</reference>
<reference key="2">
    <citation type="submission" date="2007-10" db="UniProtKB">
        <title>Shotgun proteomic analysis of total and membrane protein extracts of S. aureus strain N315.</title>
        <authorList>
            <person name="Vaezzadeh A.R."/>
            <person name="Deshusses J."/>
            <person name="Lescuyer P."/>
            <person name="Hochstrasser D.F."/>
        </authorList>
    </citation>
    <scope>IDENTIFICATION BY MASS SPECTROMETRY [LARGE SCALE ANALYSIS]</scope>
    <source>
        <strain>N315</strain>
    </source>
</reference>
<evidence type="ECO:0000255" key="1">
    <source>
        <dbReference type="HAMAP-Rule" id="MF_00036"/>
    </source>
</evidence>
<feature type="chain" id="PRO_0000075206" description="Alanine--tRNA ligase">
    <location>
        <begin position="1"/>
        <end position="876"/>
    </location>
</feature>
<feature type="binding site" evidence="1">
    <location>
        <position position="565"/>
    </location>
    <ligand>
        <name>Zn(2+)</name>
        <dbReference type="ChEBI" id="CHEBI:29105"/>
    </ligand>
</feature>
<feature type="binding site" evidence="1">
    <location>
        <position position="569"/>
    </location>
    <ligand>
        <name>Zn(2+)</name>
        <dbReference type="ChEBI" id="CHEBI:29105"/>
    </ligand>
</feature>
<feature type="binding site" evidence="1">
    <location>
        <position position="667"/>
    </location>
    <ligand>
        <name>Zn(2+)</name>
        <dbReference type="ChEBI" id="CHEBI:29105"/>
    </ligand>
</feature>
<feature type="binding site" evidence="1">
    <location>
        <position position="671"/>
    </location>
    <ligand>
        <name>Zn(2+)</name>
        <dbReference type="ChEBI" id="CHEBI:29105"/>
    </ligand>
</feature>
<dbReference type="EC" id="6.1.1.7" evidence="1"/>
<dbReference type="EMBL" id="BA000018">
    <property type="protein sequence ID" value="BAB42710.1"/>
    <property type="molecule type" value="Genomic_DNA"/>
</dbReference>
<dbReference type="PIR" id="A89944">
    <property type="entry name" value="A89944"/>
</dbReference>
<dbReference type="RefSeq" id="WP_000734075.1">
    <property type="nucleotide sequence ID" value="NC_002745.2"/>
</dbReference>
<dbReference type="SMR" id="P67011"/>
<dbReference type="EnsemblBacteria" id="BAB42710">
    <property type="protein sequence ID" value="BAB42710"/>
    <property type="gene ID" value="BAB42710"/>
</dbReference>
<dbReference type="KEGG" id="sau:SA1446"/>
<dbReference type="HOGENOM" id="CLU_004485_1_1_9"/>
<dbReference type="GO" id="GO:0005829">
    <property type="term" value="C:cytosol"/>
    <property type="evidence" value="ECO:0007669"/>
    <property type="project" value="TreeGrafter"/>
</dbReference>
<dbReference type="GO" id="GO:0004813">
    <property type="term" value="F:alanine-tRNA ligase activity"/>
    <property type="evidence" value="ECO:0007669"/>
    <property type="project" value="UniProtKB-UniRule"/>
</dbReference>
<dbReference type="GO" id="GO:0002161">
    <property type="term" value="F:aminoacyl-tRNA deacylase activity"/>
    <property type="evidence" value="ECO:0007669"/>
    <property type="project" value="TreeGrafter"/>
</dbReference>
<dbReference type="GO" id="GO:0005524">
    <property type="term" value="F:ATP binding"/>
    <property type="evidence" value="ECO:0007669"/>
    <property type="project" value="UniProtKB-UniRule"/>
</dbReference>
<dbReference type="GO" id="GO:0140096">
    <property type="term" value="F:catalytic activity, acting on a protein"/>
    <property type="evidence" value="ECO:0007669"/>
    <property type="project" value="UniProtKB-ARBA"/>
</dbReference>
<dbReference type="GO" id="GO:0016740">
    <property type="term" value="F:transferase activity"/>
    <property type="evidence" value="ECO:0007669"/>
    <property type="project" value="UniProtKB-ARBA"/>
</dbReference>
<dbReference type="GO" id="GO:0000049">
    <property type="term" value="F:tRNA binding"/>
    <property type="evidence" value="ECO:0007669"/>
    <property type="project" value="UniProtKB-KW"/>
</dbReference>
<dbReference type="GO" id="GO:0008270">
    <property type="term" value="F:zinc ion binding"/>
    <property type="evidence" value="ECO:0007669"/>
    <property type="project" value="UniProtKB-UniRule"/>
</dbReference>
<dbReference type="GO" id="GO:0006419">
    <property type="term" value="P:alanyl-tRNA aminoacylation"/>
    <property type="evidence" value="ECO:0007669"/>
    <property type="project" value="UniProtKB-UniRule"/>
</dbReference>
<dbReference type="CDD" id="cd00673">
    <property type="entry name" value="AlaRS_core"/>
    <property type="match status" value="1"/>
</dbReference>
<dbReference type="FunFam" id="2.40.30.130:FF:000001">
    <property type="entry name" value="Alanine--tRNA ligase"/>
    <property type="match status" value="1"/>
</dbReference>
<dbReference type="FunFam" id="3.10.310.40:FF:000001">
    <property type="entry name" value="Alanine--tRNA ligase"/>
    <property type="match status" value="1"/>
</dbReference>
<dbReference type="FunFam" id="3.30.54.20:FF:000001">
    <property type="entry name" value="Alanine--tRNA ligase"/>
    <property type="match status" value="1"/>
</dbReference>
<dbReference type="FunFam" id="3.30.930.10:FF:000046">
    <property type="entry name" value="Alanine--tRNA ligase"/>
    <property type="match status" value="1"/>
</dbReference>
<dbReference type="FunFam" id="3.30.980.10:FF:000004">
    <property type="entry name" value="Alanine--tRNA ligase, cytoplasmic"/>
    <property type="match status" value="1"/>
</dbReference>
<dbReference type="Gene3D" id="2.40.30.130">
    <property type="match status" value="1"/>
</dbReference>
<dbReference type="Gene3D" id="3.10.310.40">
    <property type="match status" value="1"/>
</dbReference>
<dbReference type="Gene3D" id="3.30.54.20">
    <property type="match status" value="1"/>
</dbReference>
<dbReference type="Gene3D" id="3.30.930.10">
    <property type="entry name" value="Bira Bifunctional Protein, Domain 2"/>
    <property type="match status" value="1"/>
</dbReference>
<dbReference type="Gene3D" id="3.30.980.10">
    <property type="entry name" value="Threonyl-trna Synthetase, Chain A, domain 2"/>
    <property type="match status" value="1"/>
</dbReference>
<dbReference type="HAMAP" id="MF_00036_B">
    <property type="entry name" value="Ala_tRNA_synth_B"/>
    <property type="match status" value="1"/>
</dbReference>
<dbReference type="InterPro" id="IPR045864">
    <property type="entry name" value="aa-tRNA-synth_II/BPL/LPL"/>
</dbReference>
<dbReference type="InterPro" id="IPR002318">
    <property type="entry name" value="Ala-tRNA-lgiase_IIc"/>
</dbReference>
<dbReference type="InterPro" id="IPR018162">
    <property type="entry name" value="Ala-tRNA-ligase_IIc_anticod-bd"/>
</dbReference>
<dbReference type="InterPro" id="IPR018165">
    <property type="entry name" value="Ala-tRNA-synth_IIc_core"/>
</dbReference>
<dbReference type="InterPro" id="IPR018164">
    <property type="entry name" value="Ala-tRNA-synth_IIc_N"/>
</dbReference>
<dbReference type="InterPro" id="IPR050058">
    <property type="entry name" value="Ala-tRNA_ligase"/>
</dbReference>
<dbReference type="InterPro" id="IPR023033">
    <property type="entry name" value="Ala_tRNA_ligase_euk/bac"/>
</dbReference>
<dbReference type="InterPro" id="IPR003156">
    <property type="entry name" value="DHHA1_dom"/>
</dbReference>
<dbReference type="InterPro" id="IPR018163">
    <property type="entry name" value="Thr/Ala-tRNA-synth_IIc_edit"/>
</dbReference>
<dbReference type="InterPro" id="IPR009000">
    <property type="entry name" value="Transl_B-barrel_sf"/>
</dbReference>
<dbReference type="InterPro" id="IPR012947">
    <property type="entry name" value="tRNA_SAD"/>
</dbReference>
<dbReference type="NCBIfam" id="TIGR00344">
    <property type="entry name" value="alaS"/>
    <property type="match status" value="1"/>
</dbReference>
<dbReference type="PANTHER" id="PTHR11777:SF9">
    <property type="entry name" value="ALANINE--TRNA LIGASE, CYTOPLASMIC"/>
    <property type="match status" value="1"/>
</dbReference>
<dbReference type="PANTHER" id="PTHR11777">
    <property type="entry name" value="ALANYL-TRNA SYNTHETASE"/>
    <property type="match status" value="1"/>
</dbReference>
<dbReference type="Pfam" id="PF02272">
    <property type="entry name" value="DHHA1"/>
    <property type="match status" value="1"/>
</dbReference>
<dbReference type="Pfam" id="PF01411">
    <property type="entry name" value="tRNA-synt_2c"/>
    <property type="match status" value="1"/>
</dbReference>
<dbReference type="Pfam" id="PF07973">
    <property type="entry name" value="tRNA_SAD"/>
    <property type="match status" value="1"/>
</dbReference>
<dbReference type="PRINTS" id="PR00980">
    <property type="entry name" value="TRNASYNTHALA"/>
</dbReference>
<dbReference type="SMART" id="SM00863">
    <property type="entry name" value="tRNA_SAD"/>
    <property type="match status" value="1"/>
</dbReference>
<dbReference type="SUPFAM" id="SSF55681">
    <property type="entry name" value="Class II aaRS and biotin synthetases"/>
    <property type="match status" value="1"/>
</dbReference>
<dbReference type="SUPFAM" id="SSF101353">
    <property type="entry name" value="Putative anticodon-binding domain of alanyl-tRNA synthetase (AlaRS)"/>
    <property type="match status" value="1"/>
</dbReference>
<dbReference type="SUPFAM" id="SSF55186">
    <property type="entry name" value="ThrRS/AlaRS common domain"/>
    <property type="match status" value="1"/>
</dbReference>
<dbReference type="SUPFAM" id="SSF50447">
    <property type="entry name" value="Translation proteins"/>
    <property type="match status" value="1"/>
</dbReference>
<dbReference type="PROSITE" id="PS50860">
    <property type="entry name" value="AA_TRNA_LIGASE_II_ALA"/>
    <property type="match status" value="1"/>
</dbReference>
<protein>
    <recommendedName>
        <fullName evidence="1">Alanine--tRNA ligase</fullName>
        <ecNumber evidence="1">6.1.1.7</ecNumber>
    </recommendedName>
    <alternativeName>
        <fullName evidence="1">Alanyl-tRNA synthetase</fullName>
        <shortName evidence="1">AlaRS</shortName>
    </alternativeName>
</protein>
<accession>P67011</accession>
<accession>Q99TN1</accession>
<organism>
    <name type="scientific">Staphylococcus aureus (strain N315)</name>
    <dbReference type="NCBI Taxonomy" id="158879"/>
    <lineage>
        <taxon>Bacteria</taxon>
        <taxon>Bacillati</taxon>
        <taxon>Bacillota</taxon>
        <taxon>Bacilli</taxon>
        <taxon>Bacillales</taxon>
        <taxon>Staphylococcaceae</taxon>
        <taxon>Staphylococcus</taxon>
    </lineage>
</organism>
<sequence length="876" mass="98538">MKKLKASEIRQKYLDFFVEKGHMVEPSAPLVPIDDDTLLWINSGVATLKKYFDGRETPKKPRIVNSQKAIRTNDIENVGFTARHHTFFEMLGNFSIGDYFKQEAIEFAWEFLTSDKWMGMEPDKLYVTIHPEDMEAYNIWHKDIGLEESRIIRIEGNFWDIGEGPSGPNTEIFYDRGEAYGQDDPAEEMYPGGENERYLEVWNLVFSEFNHNKDHSYTPLPNKNIDTGMGLERMASVSQNVRTNYETDLFMPIMNEIEKVSGKQYLVNNEQDVAFKVIADHIRTIAFAISDGALPANEGRGYVLRRLLRRAVRFSQTLGINEPFMYKLVDIVADIMEPYYPNVKEKADFIKRVIKSEEERFHETLEDGLAILNELIKKAKATTNEINGKDAFKLYDTYGFPIELTEEIAVQAGLKVDMTTFESEMQQQRDRARQARQNSQSMQVQSEVLKNITSASTFVGYDTATAQTTLTHLIYNGEEVSQVEAGETVYFMLTETPFYAVSGGQVADTGIVYNDNFEIAVSEVTKAPNGQNLHKGVVQFGQVNVGATVSAEVNQNDRRDIQKNHSATHLLHAALKSVLGDHVNQAGSLVEADRLRFDFSHFGPMTNDEIDQVERLVNEEIWKGIDVNIQEMDIASAKEMGAMALFGEKYGDVVRVVNMAPFSIELCGGIHVRNTSEIGLFKIVSESGTGAGVRRIEALTGKAAFLYLEDIQEKFNTMKSQMKVKSDDQVVEKLTQLQDEEKALLKQLEQRDKEITSLKMGNIEDQVEEINGYKVLVTEVDVPNAKAIRSTMDDFKSKLQDTIIILASNVDDKVSMVATVPKSLTNNVKAGDLIKQMAPIVGGKGGGRPDMAQGGGTQPENISKSLSFIKDYIKNL</sequence>